<accession>A7NN26</accession>
<proteinExistence type="inferred from homology"/>
<protein>
    <recommendedName>
        <fullName evidence="1">tRNA uridine 5-carboxymethylaminomethyl modification enzyme MnmG</fullName>
    </recommendedName>
    <alternativeName>
        <fullName evidence="1">Glucose-inhibited division protein A</fullName>
    </alternativeName>
</protein>
<evidence type="ECO:0000255" key="1">
    <source>
        <dbReference type="HAMAP-Rule" id="MF_00129"/>
    </source>
</evidence>
<dbReference type="EMBL" id="CP000804">
    <property type="protein sequence ID" value="ABU58958.1"/>
    <property type="molecule type" value="Genomic_DNA"/>
</dbReference>
<dbReference type="RefSeq" id="WP_012121382.1">
    <property type="nucleotide sequence ID" value="NC_009767.1"/>
</dbReference>
<dbReference type="SMR" id="A7NN26"/>
<dbReference type="STRING" id="383372.Rcas_2896"/>
<dbReference type="KEGG" id="rca:Rcas_2896"/>
<dbReference type="eggNOG" id="COG0445">
    <property type="taxonomic scope" value="Bacteria"/>
</dbReference>
<dbReference type="HOGENOM" id="CLU_007831_2_2_0"/>
<dbReference type="OrthoDB" id="9815560at2"/>
<dbReference type="Proteomes" id="UP000000263">
    <property type="component" value="Chromosome"/>
</dbReference>
<dbReference type="GO" id="GO:0005829">
    <property type="term" value="C:cytosol"/>
    <property type="evidence" value="ECO:0007669"/>
    <property type="project" value="TreeGrafter"/>
</dbReference>
<dbReference type="GO" id="GO:0050660">
    <property type="term" value="F:flavin adenine dinucleotide binding"/>
    <property type="evidence" value="ECO:0007669"/>
    <property type="project" value="UniProtKB-UniRule"/>
</dbReference>
<dbReference type="GO" id="GO:0030488">
    <property type="term" value="P:tRNA methylation"/>
    <property type="evidence" value="ECO:0007669"/>
    <property type="project" value="TreeGrafter"/>
</dbReference>
<dbReference type="GO" id="GO:0002098">
    <property type="term" value="P:tRNA wobble uridine modification"/>
    <property type="evidence" value="ECO:0007669"/>
    <property type="project" value="InterPro"/>
</dbReference>
<dbReference type="FunFam" id="1.10.150.570:FF:000001">
    <property type="entry name" value="tRNA uridine 5-carboxymethylaminomethyl modification enzyme MnmG"/>
    <property type="match status" value="1"/>
</dbReference>
<dbReference type="FunFam" id="3.50.50.60:FF:000002">
    <property type="entry name" value="tRNA uridine 5-carboxymethylaminomethyl modification enzyme MnmG"/>
    <property type="match status" value="1"/>
</dbReference>
<dbReference type="Gene3D" id="3.50.50.60">
    <property type="entry name" value="FAD/NAD(P)-binding domain"/>
    <property type="match status" value="2"/>
</dbReference>
<dbReference type="Gene3D" id="1.10.150.570">
    <property type="entry name" value="GidA associated domain, C-terminal subdomain"/>
    <property type="match status" value="1"/>
</dbReference>
<dbReference type="Gene3D" id="1.10.10.1800">
    <property type="entry name" value="tRNA uridine 5-carboxymethylaminomethyl modification enzyme MnmG/GidA"/>
    <property type="match status" value="1"/>
</dbReference>
<dbReference type="HAMAP" id="MF_00129">
    <property type="entry name" value="MnmG_GidA"/>
    <property type="match status" value="1"/>
</dbReference>
<dbReference type="InterPro" id="IPR036188">
    <property type="entry name" value="FAD/NAD-bd_sf"/>
</dbReference>
<dbReference type="InterPro" id="IPR049312">
    <property type="entry name" value="GIDA_C_N"/>
</dbReference>
<dbReference type="InterPro" id="IPR004416">
    <property type="entry name" value="MnmG"/>
</dbReference>
<dbReference type="InterPro" id="IPR002218">
    <property type="entry name" value="MnmG-rel"/>
</dbReference>
<dbReference type="InterPro" id="IPR020595">
    <property type="entry name" value="MnmG-rel_CS"/>
</dbReference>
<dbReference type="InterPro" id="IPR026904">
    <property type="entry name" value="MnmG_C"/>
</dbReference>
<dbReference type="InterPro" id="IPR047001">
    <property type="entry name" value="MnmG_C_subdom"/>
</dbReference>
<dbReference type="InterPro" id="IPR044920">
    <property type="entry name" value="MnmG_C_subdom_sf"/>
</dbReference>
<dbReference type="InterPro" id="IPR040131">
    <property type="entry name" value="MnmG_N"/>
</dbReference>
<dbReference type="PANTHER" id="PTHR11806">
    <property type="entry name" value="GLUCOSE INHIBITED DIVISION PROTEIN A"/>
    <property type="match status" value="1"/>
</dbReference>
<dbReference type="PANTHER" id="PTHR11806:SF0">
    <property type="entry name" value="PROTEIN MTO1 HOMOLOG, MITOCHONDRIAL"/>
    <property type="match status" value="1"/>
</dbReference>
<dbReference type="Pfam" id="PF01134">
    <property type="entry name" value="GIDA"/>
    <property type="match status" value="2"/>
</dbReference>
<dbReference type="Pfam" id="PF21680">
    <property type="entry name" value="GIDA_C_1st"/>
    <property type="match status" value="1"/>
</dbReference>
<dbReference type="Pfam" id="PF13932">
    <property type="entry name" value="SAM_GIDA_C"/>
    <property type="match status" value="1"/>
</dbReference>
<dbReference type="PRINTS" id="PR00411">
    <property type="entry name" value="PNDRDTASEI"/>
</dbReference>
<dbReference type="SMART" id="SM01228">
    <property type="entry name" value="GIDA_assoc_3"/>
    <property type="match status" value="1"/>
</dbReference>
<dbReference type="SUPFAM" id="SSF51905">
    <property type="entry name" value="FAD/NAD(P)-binding domain"/>
    <property type="match status" value="1"/>
</dbReference>
<dbReference type="PROSITE" id="PS01280">
    <property type="entry name" value="GIDA_1"/>
    <property type="match status" value="1"/>
</dbReference>
<dbReference type="PROSITE" id="PS01281">
    <property type="entry name" value="GIDA_2"/>
    <property type="match status" value="1"/>
</dbReference>
<comment type="function">
    <text evidence="1">NAD-binding protein involved in the addition of a carboxymethylaminomethyl (cmnm) group at the wobble position (U34) of certain tRNAs, forming tRNA-cmnm(5)s(2)U34.</text>
</comment>
<comment type="cofactor">
    <cofactor evidence="1">
        <name>FAD</name>
        <dbReference type="ChEBI" id="CHEBI:57692"/>
    </cofactor>
</comment>
<comment type="subunit">
    <text evidence="1">Homodimer. Heterotetramer of two MnmE and two MnmG subunits.</text>
</comment>
<comment type="subcellular location">
    <subcellularLocation>
        <location evidence="1">Cytoplasm</location>
    </subcellularLocation>
</comment>
<comment type="similarity">
    <text evidence="1">Belongs to the MnmG family.</text>
</comment>
<feature type="chain" id="PRO_0000345326" description="tRNA uridine 5-carboxymethylaminomethyl modification enzyme MnmG">
    <location>
        <begin position="1"/>
        <end position="676"/>
    </location>
</feature>
<feature type="binding site" evidence="1">
    <location>
        <begin position="15"/>
        <end position="20"/>
    </location>
    <ligand>
        <name>FAD</name>
        <dbReference type="ChEBI" id="CHEBI:57692"/>
    </ligand>
</feature>
<feature type="binding site" evidence="1">
    <location>
        <begin position="316"/>
        <end position="330"/>
    </location>
    <ligand>
        <name>NAD(+)</name>
        <dbReference type="ChEBI" id="CHEBI:57540"/>
    </ligand>
</feature>
<name>MNMG_ROSCS</name>
<gene>
    <name evidence="1" type="primary">mnmG</name>
    <name evidence="1" type="synonym">gidA</name>
    <name type="ordered locus">Rcas_2896</name>
</gene>
<reference key="1">
    <citation type="submission" date="2007-08" db="EMBL/GenBank/DDBJ databases">
        <title>Complete sequence of Roseiflexus castenholzii DSM 13941.</title>
        <authorList>
            <consortium name="US DOE Joint Genome Institute"/>
            <person name="Copeland A."/>
            <person name="Lucas S."/>
            <person name="Lapidus A."/>
            <person name="Barry K."/>
            <person name="Glavina del Rio T."/>
            <person name="Dalin E."/>
            <person name="Tice H."/>
            <person name="Pitluck S."/>
            <person name="Thompson L.S."/>
            <person name="Brettin T."/>
            <person name="Bruce D."/>
            <person name="Detter J.C."/>
            <person name="Han C."/>
            <person name="Tapia R."/>
            <person name="Schmutz J."/>
            <person name="Larimer F."/>
            <person name="Land M."/>
            <person name="Hauser L."/>
            <person name="Kyrpides N."/>
            <person name="Mikhailova N."/>
            <person name="Bryant D.A."/>
            <person name="Hanada S."/>
            <person name="Tsukatani Y."/>
            <person name="Richardson P."/>
        </authorList>
    </citation>
    <scope>NUCLEOTIDE SEQUENCE [LARGE SCALE GENOMIC DNA]</scope>
    <source>
        <strain>DSM 13941 / HLO8</strain>
    </source>
</reference>
<sequence length="676" mass="74761">MDSIHPFIYDLIVVGAGHAGCEAAHAAARMGCRTLLLTIDLDKLAHMSCNPSIGGPAKGHLVREIDALGGLMGRVTDRTFIQIRLLNESKGPAVQAPRAQADKRLYAKVMKETLETTPNLDLRQAMIERILLPQPPGRNGSAAPADDPAGVQPGHYAVITHTRRVYQSRALVLTTGTFLRGRAITGEAIWGAGRAGEAPATALGEDLAALGFPLVRLKTGTPPRIDARTIDFSQTSVQQGSPTPLFFGHYYRVLGEIPPEPAFTGAPACAYPEPLRAAWRPQLPCYLVHTTPEFHEIVRRNLDRAPLFSGIIEGVGPRYCPSIEDKIVRFADKERHGLFLEPEGWSTHEVYVQGCNTSLPEDVQWAMLRSIPALRRVELMRAGYAIEYDALATGEIAADMSSRRIPGLFFAGQINGTTGYEEAAAQGLMAGINAARFIQGKPPIILRRDEAYIGVLIDDLITKEIREPYRMFTSRAEHRLLLRTDNADLRLTRLAGELGLVDRERVEAVERKREESERLLRVLRGQRLFPSAATNARLSDVGIAPLSSEMSAEDVLRRPEVRYEQLRQALDLPACDADIAEQVEIEAKYGGYLQKQQREVERLRRMEARRIPPDFDFTALRGLRNEARQTLQRFRPATVGQAARLAGINPADVAILIVALERRGRRDMALDVRSGA</sequence>
<organism>
    <name type="scientific">Roseiflexus castenholzii (strain DSM 13941 / HLO8)</name>
    <dbReference type="NCBI Taxonomy" id="383372"/>
    <lineage>
        <taxon>Bacteria</taxon>
        <taxon>Bacillati</taxon>
        <taxon>Chloroflexota</taxon>
        <taxon>Chloroflexia</taxon>
        <taxon>Chloroflexales</taxon>
        <taxon>Roseiflexineae</taxon>
        <taxon>Roseiflexaceae</taxon>
        <taxon>Roseiflexus</taxon>
    </lineage>
</organism>
<keyword id="KW-0963">Cytoplasm</keyword>
<keyword id="KW-0274">FAD</keyword>
<keyword id="KW-0285">Flavoprotein</keyword>
<keyword id="KW-0520">NAD</keyword>
<keyword id="KW-1185">Reference proteome</keyword>
<keyword id="KW-0819">tRNA processing</keyword>